<dbReference type="EMBL" id="DQ268832">
    <property type="protein sequence ID" value="ABB87177.1"/>
    <property type="molecule type" value="mRNA"/>
</dbReference>
<dbReference type="EMBL" id="DQ268833">
    <property type="protein sequence ID" value="ABB87178.1"/>
    <property type="molecule type" value="mRNA"/>
</dbReference>
<dbReference type="RefSeq" id="NP_001041594.1">
    <property type="nucleotide sequence ID" value="NM_001048129.1"/>
</dbReference>
<dbReference type="SMR" id="Q20FD0"/>
<dbReference type="FunCoup" id="Q20FD0">
    <property type="interactions" value="289"/>
</dbReference>
<dbReference type="STRING" id="9615.ENSCAFP00000034270"/>
<dbReference type="GlyCosmos" id="Q20FD0">
    <property type="glycosylation" value="1 site, No reported glycans"/>
</dbReference>
<dbReference type="PaxDb" id="9612-ENSCAFP00000034270"/>
<dbReference type="Ensembl" id="ENSCAFT00000014095.4">
    <molecule id="Q20FD0-2"/>
    <property type="protein sequence ID" value="ENSCAFP00000013040.4"/>
    <property type="gene ID" value="ENSCAFG00000008886.6"/>
</dbReference>
<dbReference type="Ensembl" id="ENSCAFT00000038532.4">
    <molecule id="Q20FD0-1"/>
    <property type="protein sequence ID" value="ENSCAFP00000034270.3"/>
    <property type="gene ID" value="ENSCAFG00000008886.6"/>
</dbReference>
<dbReference type="GeneID" id="608459"/>
<dbReference type="KEGG" id="cfa:608459"/>
<dbReference type="CTD" id="2250"/>
<dbReference type="eggNOG" id="KOG3885">
    <property type="taxonomic scope" value="Eukaryota"/>
</dbReference>
<dbReference type="InParanoid" id="Q20FD0"/>
<dbReference type="OrthoDB" id="9947297at2759"/>
<dbReference type="Reactome" id="R-CFA-109704">
    <property type="pathway name" value="PI3K Cascade"/>
</dbReference>
<dbReference type="Reactome" id="R-CFA-1257604">
    <property type="pathway name" value="PIP3 activates AKT signaling"/>
</dbReference>
<dbReference type="Reactome" id="R-CFA-190372">
    <property type="pathway name" value="FGFR3c ligand binding and activation"/>
</dbReference>
<dbReference type="Reactome" id="R-CFA-190373">
    <property type="pathway name" value="FGFR1c ligand binding and activation"/>
</dbReference>
<dbReference type="Reactome" id="R-CFA-190375">
    <property type="pathway name" value="FGFR2c ligand binding and activation"/>
</dbReference>
<dbReference type="Reactome" id="R-CFA-5654219">
    <property type="pathway name" value="Phospholipase C-mediated cascade: FGFR1"/>
</dbReference>
<dbReference type="Reactome" id="R-CFA-5654221">
    <property type="pathway name" value="Phospholipase C-mediated cascade, FGFR2"/>
</dbReference>
<dbReference type="Reactome" id="R-CFA-5654227">
    <property type="pathway name" value="Phospholipase C-mediated cascade, FGFR3"/>
</dbReference>
<dbReference type="Reactome" id="R-CFA-5654687">
    <property type="pathway name" value="Downstream signaling of activated FGFR1"/>
</dbReference>
<dbReference type="Reactome" id="R-CFA-5654688">
    <property type="pathway name" value="SHC-mediated cascade:FGFR1"/>
</dbReference>
<dbReference type="Reactome" id="R-CFA-5654689">
    <property type="pathway name" value="PI-3K cascade:FGFR1"/>
</dbReference>
<dbReference type="Reactome" id="R-CFA-5654693">
    <property type="pathway name" value="FRS-mediated FGFR1 signaling"/>
</dbReference>
<dbReference type="Reactome" id="R-CFA-5654695">
    <property type="pathway name" value="PI-3K cascade:FGFR2"/>
</dbReference>
<dbReference type="Reactome" id="R-CFA-5654699">
    <property type="pathway name" value="SHC-mediated cascade:FGFR2"/>
</dbReference>
<dbReference type="Reactome" id="R-CFA-5654700">
    <property type="pathway name" value="FRS-mediated FGFR2 signaling"/>
</dbReference>
<dbReference type="Reactome" id="R-CFA-5654704">
    <property type="pathway name" value="SHC-mediated cascade:FGFR3"/>
</dbReference>
<dbReference type="Reactome" id="R-CFA-5654706">
    <property type="pathway name" value="FRS-mediated FGFR3 signaling"/>
</dbReference>
<dbReference type="Reactome" id="R-CFA-5654710">
    <property type="pathway name" value="PI-3K cascade:FGFR3"/>
</dbReference>
<dbReference type="Reactome" id="R-CFA-5654726">
    <property type="pathway name" value="Negative regulation of FGFR1 signaling"/>
</dbReference>
<dbReference type="Reactome" id="R-CFA-5654727">
    <property type="pathway name" value="Negative regulation of FGFR2 signaling"/>
</dbReference>
<dbReference type="Reactome" id="R-CFA-5654732">
    <property type="pathway name" value="Negative regulation of FGFR3 signaling"/>
</dbReference>
<dbReference type="Reactome" id="R-CFA-5658623">
    <property type="pathway name" value="FGFRL1 modulation of FGFR1 signaling"/>
</dbReference>
<dbReference type="Reactome" id="R-CFA-5673001">
    <property type="pathway name" value="RAF/MAP kinase cascade"/>
</dbReference>
<dbReference type="Reactome" id="R-CFA-6811558">
    <property type="pathway name" value="PI5P, PP2A and IER3 Regulate PI3K/AKT Signaling"/>
</dbReference>
<dbReference type="Proteomes" id="UP000002254">
    <property type="component" value="Chromosome 32"/>
</dbReference>
<dbReference type="Proteomes" id="UP000694429">
    <property type="component" value="Unplaced"/>
</dbReference>
<dbReference type="Proteomes" id="UP000694542">
    <property type="component" value="Unplaced"/>
</dbReference>
<dbReference type="Proteomes" id="UP000805418">
    <property type="component" value="Unplaced"/>
</dbReference>
<dbReference type="GO" id="GO:0005576">
    <property type="term" value="C:extracellular region"/>
    <property type="evidence" value="ECO:0007669"/>
    <property type="project" value="UniProtKB-SubCell"/>
</dbReference>
<dbReference type="GO" id="GO:0008083">
    <property type="term" value="F:growth factor activity"/>
    <property type="evidence" value="ECO:0007669"/>
    <property type="project" value="UniProtKB-KW"/>
</dbReference>
<dbReference type="GO" id="GO:0051781">
    <property type="term" value="P:positive regulation of cell division"/>
    <property type="evidence" value="ECO:0007669"/>
    <property type="project" value="UniProtKB-KW"/>
</dbReference>
<dbReference type="CDD" id="cd23317">
    <property type="entry name" value="beta-trefoil_FGF5"/>
    <property type="match status" value="1"/>
</dbReference>
<dbReference type="FunFam" id="2.80.10.50:FF:000042">
    <property type="entry name" value="Fibroblast growth factor"/>
    <property type="match status" value="1"/>
</dbReference>
<dbReference type="Gene3D" id="2.80.10.50">
    <property type="match status" value="1"/>
</dbReference>
<dbReference type="InterPro" id="IPR002209">
    <property type="entry name" value="Fibroblast_GF_fam"/>
</dbReference>
<dbReference type="InterPro" id="IPR008996">
    <property type="entry name" value="IL1/FGF"/>
</dbReference>
<dbReference type="PANTHER" id="PTHR11486">
    <property type="entry name" value="FIBROBLAST GROWTH FACTOR"/>
    <property type="match status" value="1"/>
</dbReference>
<dbReference type="Pfam" id="PF00167">
    <property type="entry name" value="FGF"/>
    <property type="match status" value="1"/>
</dbReference>
<dbReference type="PRINTS" id="PR00263">
    <property type="entry name" value="HBGFFGF"/>
</dbReference>
<dbReference type="PRINTS" id="PR00262">
    <property type="entry name" value="IL1HBGF"/>
</dbReference>
<dbReference type="SMART" id="SM00442">
    <property type="entry name" value="FGF"/>
    <property type="match status" value="1"/>
</dbReference>
<dbReference type="SUPFAM" id="SSF50353">
    <property type="entry name" value="Cytokine"/>
    <property type="match status" value="1"/>
</dbReference>
<dbReference type="PROSITE" id="PS00247">
    <property type="entry name" value="HBGF_FGF"/>
    <property type="match status" value="1"/>
</dbReference>
<accession>Q20FD0</accession>
<accession>Q20FC9</accession>
<proteinExistence type="evidence at transcript level"/>
<keyword id="KW-0025">Alternative splicing</keyword>
<keyword id="KW-0325">Glycoprotein</keyword>
<keyword id="KW-0339">Growth factor</keyword>
<keyword id="KW-0497">Mitogen</keyword>
<keyword id="KW-1185">Reference proteome</keyword>
<keyword id="KW-0964">Secreted</keyword>
<keyword id="KW-0732">Signal</keyword>
<reference key="1">
    <citation type="journal article" date="2006" name="Anim. Genet.">
        <title>The long and the short of it: evidence that FGF5 is a major determinant of canine 'hair'-itability.</title>
        <authorList>
            <person name="Housley D.J.E."/>
            <person name="Venta P.J."/>
        </authorList>
    </citation>
    <scope>NUCLEOTIDE SEQUENCE [MRNA] (ISOFORMS LONG AND SHORT)</scope>
    <scope>FUNCTION</scope>
    <scope>VARIANTS THR-SER-50 INS AND PHE-95</scope>
    <scope>POLYMORPHISM</scope>
    <source>
        <strain>Corgi</strain>
    </source>
</reference>
<name>FGF5_CANLF</name>
<sequence length="270" mass="29183">MSLSLLLLLFLSHLILSAWAHGEKHLAPKGQPGPAATGRNPGGAGGSSTSGGTTSSSSSSVSSAPGASPGIRGSGSEQGSFQWSPSGRRTGSLYCRVGIGFHLQIYPDGKVNGSHEANMLSILEIFAVSQGIVGIRGVFSNKFLAMSKKGKLHASAKFTDDCKFRERFQENSYNTYASAIHRSEPAGREWYVALNKRGKAKRGCSPRVKPQHVSTHFLPRFKQLEHPELSFTVTVPEKKKPPSHVKPKVPLSAPRKSPNTVKYRLKFRFG</sequence>
<feature type="signal peptide" evidence="2">
    <location>
        <begin position="1"/>
        <end position="20"/>
    </location>
</feature>
<feature type="chain" id="PRO_0000279864" description="Fibroblast growth factor 5">
    <location>
        <begin position="21"/>
        <end position="270"/>
    </location>
</feature>
<feature type="region of interest" description="Disordered" evidence="3">
    <location>
        <begin position="26"/>
        <end position="84"/>
    </location>
</feature>
<feature type="region of interest" description="Disordered" evidence="3">
    <location>
        <begin position="237"/>
        <end position="257"/>
    </location>
</feature>
<feature type="compositionally biased region" description="Gly residues" evidence="3">
    <location>
        <begin position="40"/>
        <end position="49"/>
    </location>
</feature>
<feature type="compositionally biased region" description="Low complexity" evidence="3">
    <location>
        <begin position="50"/>
        <end position="70"/>
    </location>
</feature>
<feature type="compositionally biased region" description="Polar residues" evidence="3">
    <location>
        <begin position="75"/>
        <end position="84"/>
    </location>
</feature>
<feature type="glycosylation site" description="N-linked (GlcNAc...) asparagine" evidence="2">
    <location>
        <position position="112"/>
    </location>
</feature>
<feature type="splice variant" id="VSP_023508" description="In isoform Short." evidence="5">
    <original>ILEI</original>
    <variation>QVYR</variation>
    <location>
        <begin position="122"/>
        <end position="125"/>
    </location>
</feature>
<feature type="splice variant" id="VSP_023509" description="In isoform Short." evidence="5">
    <location>
        <begin position="126"/>
        <end position="270"/>
    </location>
</feature>
<feature type="sequence variant" description="In long hair dog breeds." evidence="4">
    <original>S</original>
    <variation>STS</variation>
    <location>
        <position position="50"/>
    </location>
</feature>
<feature type="sequence variant" description="In long hair dog breeds." evidence="4">
    <original>C</original>
    <variation>F</variation>
    <location>
        <position position="95"/>
    </location>
</feature>
<gene>
    <name type="primary">FGF5</name>
</gene>
<comment type="function">
    <text evidence="4">Plays an important role in the regulation of cell proliferation and cell differentiation. Required for normal regulation of the hair growth cycle. Functions as an inhibitor of hair elongation by promoting progression from anagen, the growth phase of the hair follicle, into catagen the apoptosis-induced regression phase.</text>
</comment>
<comment type="subunit">
    <text evidence="1">Interacts with FGFR1 and FGFR2. Affinity between fibroblast growth factors (FGFs) and their receptors is increased by heparan sulfate glycosaminoglycans that function as coreceptors (By similarity).</text>
</comment>
<comment type="subcellular location">
    <subcellularLocation>
        <location evidence="6">Secreted</location>
    </subcellularLocation>
</comment>
<comment type="alternative products">
    <event type="alternative splicing"/>
    <isoform>
        <id>Q20FD0-1</id>
        <name>Long</name>
        <sequence type="displayed"/>
    </isoform>
    <isoform>
        <id>Q20FD0-2</id>
        <name>Short</name>
        <sequence type="described" ref="VSP_023508 VSP_023509"/>
    </isoform>
</comment>
<comment type="polymorphism">
    <text evidence="4">The polymorphism in position 95 is responsible for hair length variation. The long-haired phenotype is associated with Phe-95 or with the insertion in position 50.</text>
</comment>
<comment type="miscellaneous">
    <molecule>Isoform Short</molecule>
    <text evidence="1">Seems to have an antagonistic effect compared to that of the isoform Long.</text>
</comment>
<comment type="similarity">
    <text evidence="6">Belongs to the heparin-binding growth factors family.</text>
</comment>
<evidence type="ECO:0000250" key="1"/>
<evidence type="ECO:0000255" key="2"/>
<evidence type="ECO:0000256" key="3">
    <source>
        <dbReference type="SAM" id="MobiDB-lite"/>
    </source>
</evidence>
<evidence type="ECO:0000269" key="4">
    <source>
    </source>
</evidence>
<evidence type="ECO:0000303" key="5">
    <source>
    </source>
</evidence>
<evidence type="ECO:0000305" key="6"/>
<protein>
    <recommendedName>
        <fullName>Fibroblast growth factor 5</fullName>
        <shortName>FGF-5</shortName>
    </recommendedName>
</protein>
<organism>
    <name type="scientific">Canis lupus familiaris</name>
    <name type="common">Dog</name>
    <name type="synonym">Canis familiaris</name>
    <dbReference type="NCBI Taxonomy" id="9615"/>
    <lineage>
        <taxon>Eukaryota</taxon>
        <taxon>Metazoa</taxon>
        <taxon>Chordata</taxon>
        <taxon>Craniata</taxon>
        <taxon>Vertebrata</taxon>
        <taxon>Euteleostomi</taxon>
        <taxon>Mammalia</taxon>
        <taxon>Eutheria</taxon>
        <taxon>Laurasiatheria</taxon>
        <taxon>Carnivora</taxon>
        <taxon>Caniformia</taxon>
        <taxon>Canidae</taxon>
        <taxon>Canis</taxon>
    </lineage>
</organism>